<proteinExistence type="inferred from homology"/>
<accession>Q6SQH4</accession>
<sequence length="97" mass="11203">MPSQMEHAMETMMFTFHKFAGDKGYLTKEDLRVLMEKEFPGFLENQKDPLAVDKIMKDLDQCRDGKVGFQSFFSLIAGLTIACNDYFVVHMKQKGKK</sequence>
<reference key="1">
    <citation type="submission" date="2003-10" db="EMBL/GenBank/DDBJ databases">
        <title>Rabbit S100 calcium binding protein A10 mRNA.</title>
        <authorList>
            <person name="Wiehler W.B."/>
            <person name="Pho M.V.C."/>
            <person name="Walsh M.P."/>
        </authorList>
    </citation>
    <scope>NUCLEOTIDE SEQUENCE [MRNA]</scope>
    <source>
        <tissue>Lung</tissue>
    </source>
</reference>
<gene>
    <name type="primary">S100a10</name>
</gene>
<dbReference type="EMBL" id="AY452731">
    <property type="protein sequence ID" value="AAR17457.1"/>
    <property type="molecule type" value="mRNA"/>
</dbReference>
<dbReference type="RefSeq" id="NP_001075632.1">
    <property type="nucleotide sequence ID" value="NM_001082163.1"/>
</dbReference>
<dbReference type="SMR" id="Q6SQH4"/>
<dbReference type="CORUM" id="Q6SQH4"/>
<dbReference type="FunCoup" id="Q6SQH4">
    <property type="interactions" value="126"/>
</dbReference>
<dbReference type="STRING" id="9986.ENSOCUP00000004505"/>
<dbReference type="PaxDb" id="9986-ENSOCUP00000004503"/>
<dbReference type="Ensembl" id="ENSOCUT00000005196.2">
    <property type="protein sequence ID" value="ENSOCUP00000004503.1"/>
    <property type="gene ID" value="ENSOCUG00000005198.2"/>
</dbReference>
<dbReference type="GeneID" id="100008922"/>
<dbReference type="KEGG" id="ocu:100008922"/>
<dbReference type="CTD" id="6281"/>
<dbReference type="eggNOG" id="ENOG502S6TB">
    <property type="taxonomic scope" value="Eukaryota"/>
</dbReference>
<dbReference type="GeneTree" id="ENSGT00940000154197"/>
<dbReference type="HOGENOM" id="CLU_138624_2_1_1"/>
<dbReference type="InParanoid" id="Q6SQH4"/>
<dbReference type="OMA" id="VACEQCY"/>
<dbReference type="OrthoDB" id="26525at2759"/>
<dbReference type="TreeFam" id="TF332727"/>
<dbReference type="Proteomes" id="UP000001811">
    <property type="component" value="Chromosome 13"/>
</dbReference>
<dbReference type="Bgee" id="ENSOCUG00000005198">
    <property type="expression patterns" value="Expressed in lung and 16 other cell types or tissues"/>
</dbReference>
<dbReference type="ExpressionAtlas" id="Q6SQH4">
    <property type="expression patterns" value="baseline"/>
</dbReference>
<dbReference type="GO" id="GO:0005737">
    <property type="term" value="C:cytoplasm"/>
    <property type="evidence" value="ECO:0007669"/>
    <property type="project" value="TreeGrafter"/>
</dbReference>
<dbReference type="GO" id="GO:0005615">
    <property type="term" value="C:extracellular space"/>
    <property type="evidence" value="ECO:0007669"/>
    <property type="project" value="TreeGrafter"/>
</dbReference>
<dbReference type="GO" id="GO:0005509">
    <property type="term" value="F:calcium ion binding"/>
    <property type="evidence" value="ECO:0007669"/>
    <property type="project" value="TreeGrafter"/>
</dbReference>
<dbReference type="GO" id="GO:0048306">
    <property type="term" value="F:calcium-dependent protein binding"/>
    <property type="evidence" value="ECO:0007669"/>
    <property type="project" value="TreeGrafter"/>
</dbReference>
<dbReference type="GO" id="GO:0044325">
    <property type="term" value="F:transmembrane transporter binding"/>
    <property type="evidence" value="ECO:0007669"/>
    <property type="project" value="TreeGrafter"/>
</dbReference>
<dbReference type="CDD" id="cd05024">
    <property type="entry name" value="S-100A10"/>
    <property type="match status" value="1"/>
</dbReference>
<dbReference type="FunFam" id="1.10.238.10:FF:000167">
    <property type="entry name" value="Protein S100-A10"/>
    <property type="match status" value="1"/>
</dbReference>
<dbReference type="Gene3D" id="1.10.238.10">
    <property type="entry name" value="EF-hand"/>
    <property type="match status" value="1"/>
</dbReference>
<dbReference type="InterPro" id="IPR011992">
    <property type="entry name" value="EF-hand-dom_pair"/>
</dbReference>
<dbReference type="InterPro" id="IPR028476">
    <property type="entry name" value="S100-A10"/>
</dbReference>
<dbReference type="InterPro" id="IPR001751">
    <property type="entry name" value="S100/CaBP7/8-like_CS"/>
</dbReference>
<dbReference type="InterPro" id="IPR013787">
    <property type="entry name" value="S100_Ca-bd_sub"/>
</dbReference>
<dbReference type="PANTHER" id="PTHR11639:SF74">
    <property type="entry name" value="PROTEIN S100-A10"/>
    <property type="match status" value="1"/>
</dbReference>
<dbReference type="PANTHER" id="PTHR11639">
    <property type="entry name" value="S100 CALCIUM-BINDING PROTEIN"/>
    <property type="match status" value="1"/>
</dbReference>
<dbReference type="Pfam" id="PF01023">
    <property type="entry name" value="S_100"/>
    <property type="match status" value="1"/>
</dbReference>
<dbReference type="SMART" id="SM01394">
    <property type="entry name" value="S_100"/>
    <property type="match status" value="1"/>
</dbReference>
<dbReference type="SUPFAM" id="SSF47473">
    <property type="entry name" value="EF-hand"/>
    <property type="match status" value="1"/>
</dbReference>
<dbReference type="PROSITE" id="PS00303">
    <property type="entry name" value="S100_CABP"/>
    <property type="match status" value="1"/>
</dbReference>
<keyword id="KW-0007">Acetylation</keyword>
<keyword id="KW-1017">Isopeptide bond</keyword>
<keyword id="KW-1185">Reference proteome</keyword>
<keyword id="KW-0832">Ubl conjugation</keyword>
<name>S10AA_RABIT</name>
<comment type="function">
    <text evidence="1">Because S100A10 induces the dimerization of ANXA2/p36, it may function as a regulator of protein phosphorylation in that the ANXA2 monomer is the preferred target (in vitro) of tyrosine-specific kinase.</text>
</comment>
<comment type="subunit">
    <text evidence="2 3 4">Heterotetramer containing 2 light chains of S100A10/p11 and 2 heavy chains of ANXA2/p36 (By similarity). Interacts with SCN10A (By similarity). Interacts with TASOR (By similarity).</text>
</comment>
<comment type="miscellaneous">
    <text>Does not appear to bind calcium. Contains 2 ancestral calcium site related to EF-hand domains that have lost their ability to bind calcium.</text>
</comment>
<comment type="similarity">
    <text evidence="5">Belongs to the S-100 family.</text>
</comment>
<organism>
    <name type="scientific">Oryctolagus cuniculus</name>
    <name type="common">Rabbit</name>
    <dbReference type="NCBI Taxonomy" id="9986"/>
    <lineage>
        <taxon>Eukaryota</taxon>
        <taxon>Metazoa</taxon>
        <taxon>Chordata</taxon>
        <taxon>Craniata</taxon>
        <taxon>Vertebrata</taxon>
        <taxon>Euteleostomi</taxon>
        <taxon>Mammalia</taxon>
        <taxon>Eutheria</taxon>
        <taxon>Euarchontoglires</taxon>
        <taxon>Glires</taxon>
        <taxon>Lagomorpha</taxon>
        <taxon>Leporidae</taxon>
        <taxon>Oryctolagus</taxon>
    </lineage>
</organism>
<feature type="chain" id="PRO_0000236022" description="Protein S100-A10">
    <location>
        <begin position="1"/>
        <end position="97"/>
    </location>
</feature>
<feature type="region of interest" description="Ancestral calcium site">
    <location>
        <begin position="60"/>
        <end position="71"/>
    </location>
</feature>
<feature type="modified residue" description="N6-acetyllysine" evidence="4">
    <location>
        <position position="23"/>
    </location>
</feature>
<feature type="modified residue" description="N6-acetyllysine" evidence="4">
    <location>
        <position position="28"/>
    </location>
</feature>
<feature type="modified residue" description="N6-acetyllysine; alternate" evidence="4">
    <location>
        <position position="37"/>
    </location>
</feature>
<feature type="modified residue" description="N6-acetyllysine" evidence="4">
    <location>
        <position position="54"/>
    </location>
</feature>
<feature type="modified residue" description="N6-acetyllysine" evidence="4">
    <location>
        <position position="57"/>
    </location>
</feature>
<feature type="cross-link" description="Glycyl lysine isopeptide (Lys-Gly) (interchain with G-Cter in SUMO2); alternate" evidence="4">
    <location>
        <position position="37"/>
    </location>
</feature>
<evidence type="ECO:0000250" key="1"/>
<evidence type="ECO:0000250" key="2">
    <source>
        <dbReference type="UniProtKB" id="P05943"/>
    </source>
</evidence>
<evidence type="ECO:0000250" key="3">
    <source>
        <dbReference type="UniProtKB" id="P08207"/>
    </source>
</evidence>
<evidence type="ECO:0000250" key="4">
    <source>
        <dbReference type="UniProtKB" id="P60903"/>
    </source>
</evidence>
<evidence type="ECO:0000305" key="5"/>
<protein>
    <recommendedName>
        <fullName>Protein S100-A10</fullName>
    </recommendedName>
    <alternativeName>
        <fullName>Calpactin I light chain</fullName>
    </alternativeName>
    <alternativeName>
        <fullName>Calpactin-1 light chain</fullName>
    </alternativeName>
    <alternativeName>
        <fullName>S100 calcium-binding protein A10</fullName>
    </alternativeName>
    <alternativeName>
        <fullName>p10 protein</fullName>
    </alternativeName>
</protein>